<gene>
    <name evidence="1" type="primary">nqrD</name>
    <name type="ordered locus">Sputcn32_0943</name>
</gene>
<feature type="chain" id="PRO_1000060171" description="Na(+)-translocating NADH-quinone reductase subunit D">
    <location>
        <begin position="1"/>
        <end position="210"/>
    </location>
</feature>
<feature type="transmembrane region" description="Helical" evidence="1">
    <location>
        <begin position="14"/>
        <end position="34"/>
    </location>
</feature>
<feature type="transmembrane region" description="Helical" evidence="1">
    <location>
        <begin position="42"/>
        <end position="62"/>
    </location>
</feature>
<feature type="transmembrane region" description="Helical" evidence="1">
    <location>
        <begin position="72"/>
        <end position="92"/>
    </location>
</feature>
<feature type="transmembrane region" description="Helical" evidence="1">
    <location>
        <begin position="103"/>
        <end position="123"/>
    </location>
</feature>
<feature type="transmembrane region" description="Helical" evidence="1">
    <location>
        <begin position="131"/>
        <end position="151"/>
    </location>
</feature>
<feature type="transmembrane region" description="Helical" evidence="1">
    <location>
        <begin position="178"/>
        <end position="198"/>
    </location>
</feature>
<comment type="function">
    <text evidence="1">NQR complex catalyzes the reduction of ubiquinone-1 to ubiquinol by two successive reactions, coupled with the transport of Na(+) ions from the cytoplasm to the periplasm. NqrA to NqrE are probably involved in the second step, the conversion of ubisemiquinone to ubiquinol.</text>
</comment>
<comment type="catalytic activity">
    <reaction evidence="1">
        <text>a ubiquinone + n Na(+)(in) + NADH + H(+) = a ubiquinol + n Na(+)(out) + NAD(+)</text>
        <dbReference type="Rhea" id="RHEA:47748"/>
        <dbReference type="Rhea" id="RHEA-COMP:9565"/>
        <dbReference type="Rhea" id="RHEA-COMP:9566"/>
        <dbReference type="ChEBI" id="CHEBI:15378"/>
        <dbReference type="ChEBI" id="CHEBI:16389"/>
        <dbReference type="ChEBI" id="CHEBI:17976"/>
        <dbReference type="ChEBI" id="CHEBI:29101"/>
        <dbReference type="ChEBI" id="CHEBI:57540"/>
        <dbReference type="ChEBI" id="CHEBI:57945"/>
        <dbReference type="EC" id="7.2.1.1"/>
    </reaction>
</comment>
<comment type="subunit">
    <text evidence="1">Composed of six subunits; NqrA, NqrB, NqrC, NqrD, NqrE and NqrF.</text>
</comment>
<comment type="subcellular location">
    <subcellularLocation>
        <location evidence="1">Cell inner membrane</location>
        <topology evidence="1">Multi-pass membrane protein</topology>
    </subcellularLocation>
</comment>
<comment type="similarity">
    <text evidence="1">Belongs to the NqrDE/RnfAE family.</text>
</comment>
<sequence>MSDAKELKQVLTGPIVNNNPIALQILGVCSALAVTSKLETALVMALALTAVTAFSNLFISLIRNHIPSSVRIIVQMTIIASLVIVVDQLLQAYAYQISKQLSVFVGLIITNCIVMGRAEAYAMKTPPMMSFMDGIGNGLGYGVILLAVGFVRELFGNGSLFGVQILHKISEGGWYQPNGMLLLPPSAFFLIGILIWIIRTYKPEQVEAKG</sequence>
<accession>A4Y3Y9</accession>
<evidence type="ECO:0000255" key="1">
    <source>
        <dbReference type="HAMAP-Rule" id="MF_00428"/>
    </source>
</evidence>
<protein>
    <recommendedName>
        <fullName evidence="1">Na(+)-translocating NADH-quinone reductase subunit D</fullName>
        <shortName evidence="1">Na(+)-NQR subunit D</shortName>
        <shortName evidence="1">Na(+)-translocating NQR subunit D</shortName>
        <ecNumber evidence="1">7.2.1.1</ecNumber>
    </recommendedName>
    <alternativeName>
        <fullName evidence="1">NQR complex subunit D</fullName>
    </alternativeName>
    <alternativeName>
        <fullName evidence="1">NQR-1 subunit D</fullName>
    </alternativeName>
</protein>
<proteinExistence type="inferred from homology"/>
<dbReference type="EC" id="7.2.1.1" evidence="1"/>
<dbReference type="EMBL" id="CP000681">
    <property type="protein sequence ID" value="ABP74672.1"/>
    <property type="molecule type" value="Genomic_DNA"/>
</dbReference>
<dbReference type="SMR" id="A4Y3Y9"/>
<dbReference type="STRING" id="319224.Sputcn32_0943"/>
<dbReference type="KEGG" id="spc:Sputcn32_0943"/>
<dbReference type="eggNOG" id="COG1347">
    <property type="taxonomic scope" value="Bacteria"/>
</dbReference>
<dbReference type="HOGENOM" id="CLU_046659_1_1_6"/>
<dbReference type="GO" id="GO:0005886">
    <property type="term" value="C:plasma membrane"/>
    <property type="evidence" value="ECO:0007669"/>
    <property type="project" value="UniProtKB-SubCell"/>
</dbReference>
<dbReference type="GO" id="GO:0016655">
    <property type="term" value="F:oxidoreductase activity, acting on NAD(P)H, quinone or similar compound as acceptor"/>
    <property type="evidence" value="ECO:0007669"/>
    <property type="project" value="UniProtKB-UniRule"/>
</dbReference>
<dbReference type="GO" id="GO:0006814">
    <property type="term" value="P:sodium ion transport"/>
    <property type="evidence" value="ECO:0007669"/>
    <property type="project" value="UniProtKB-UniRule"/>
</dbReference>
<dbReference type="HAMAP" id="MF_00428">
    <property type="entry name" value="NqrD"/>
    <property type="match status" value="1"/>
</dbReference>
<dbReference type="InterPro" id="IPR011292">
    <property type="entry name" value="NqrD"/>
</dbReference>
<dbReference type="InterPro" id="IPR003667">
    <property type="entry name" value="NqrDE/RnfAE"/>
</dbReference>
<dbReference type="NCBIfam" id="TIGR01939">
    <property type="entry name" value="nqrD"/>
    <property type="match status" value="1"/>
</dbReference>
<dbReference type="NCBIfam" id="NF006777">
    <property type="entry name" value="PRK09292.1"/>
    <property type="match status" value="1"/>
</dbReference>
<dbReference type="NCBIfam" id="NF009070">
    <property type="entry name" value="PRK12405.1"/>
    <property type="match status" value="1"/>
</dbReference>
<dbReference type="PANTHER" id="PTHR30586">
    <property type="entry name" value="ELECTRON TRANSPORT COMPLEX PROTEIN RNFE"/>
    <property type="match status" value="1"/>
</dbReference>
<dbReference type="PANTHER" id="PTHR30586:SF1">
    <property type="entry name" value="NA(+)-TRANSLOCATING NADH-QUINONE REDUCTASE SUBUNIT D"/>
    <property type="match status" value="1"/>
</dbReference>
<dbReference type="Pfam" id="PF02508">
    <property type="entry name" value="Rnf-Nqr"/>
    <property type="match status" value="1"/>
</dbReference>
<dbReference type="PIRSF" id="PIRSF006102">
    <property type="entry name" value="NQR_DE"/>
    <property type="match status" value="1"/>
</dbReference>
<name>NQRD_SHEPC</name>
<reference key="1">
    <citation type="submission" date="2007-04" db="EMBL/GenBank/DDBJ databases">
        <title>Complete sequence of Shewanella putrefaciens CN-32.</title>
        <authorList>
            <consortium name="US DOE Joint Genome Institute"/>
            <person name="Copeland A."/>
            <person name="Lucas S."/>
            <person name="Lapidus A."/>
            <person name="Barry K."/>
            <person name="Detter J.C."/>
            <person name="Glavina del Rio T."/>
            <person name="Hammon N."/>
            <person name="Israni S."/>
            <person name="Dalin E."/>
            <person name="Tice H."/>
            <person name="Pitluck S."/>
            <person name="Chain P."/>
            <person name="Malfatti S."/>
            <person name="Shin M."/>
            <person name="Vergez L."/>
            <person name="Schmutz J."/>
            <person name="Larimer F."/>
            <person name="Land M."/>
            <person name="Hauser L."/>
            <person name="Kyrpides N."/>
            <person name="Mikhailova N."/>
            <person name="Romine M.F."/>
            <person name="Fredrickson J."/>
            <person name="Tiedje J."/>
            <person name="Richardson P."/>
        </authorList>
    </citation>
    <scope>NUCLEOTIDE SEQUENCE [LARGE SCALE GENOMIC DNA]</scope>
    <source>
        <strain>CN-32 / ATCC BAA-453</strain>
    </source>
</reference>
<keyword id="KW-0997">Cell inner membrane</keyword>
<keyword id="KW-1003">Cell membrane</keyword>
<keyword id="KW-0406">Ion transport</keyword>
<keyword id="KW-0472">Membrane</keyword>
<keyword id="KW-0520">NAD</keyword>
<keyword id="KW-0915">Sodium</keyword>
<keyword id="KW-0739">Sodium transport</keyword>
<keyword id="KW-1278">Translocase</keyword>
<keyword id="KW-0812">Transmembrane</keyword>
<keyword id="KW-1133">Transmembrane helix</keyword>
<keyword id="KW-0813">Transport</keyword>
<keyword id="KW-0830">Ubiquinone</keyword>
<organism>
    <name type="scientific">Shewanella putrefaciens (strain CN-32 / ATCC BAA-453)</name>
    <dbReference type="NCBI Taxonomy" id="319224"/>
    <lineage>
        <taxon>Bacteria</taxon>
        <taxon>Pseudomonadati</taxon>
        <taxon>Pseudomonadota</taxon>
        <taxon>Gammaproteobacteria</taxon>
        <taxon>Alteromonadales</taxon>
        <taxon>Shewanellaceae</taxon>
        <taxon>Shewanella</taxon>
    </lineage>
</organism>